<name>RLMH_NITMU</name>
<accession>Q2YC51</accession>
<keyword id="KW-0963">Cytoplasm</keyword>
<keyword id="KW-0489">Methyltransferase</keyword>
<keyword id="KW-1185">Reference proteome</keyword>
<keyword id="KW-0698">rRNA processing</keyword>
<keyword id="KW-0949">S-adenosyl-L-methionine</keyword>
<keyword id="KW-0808">Transferase</keyword>
<reference key="1">
    <citation type="submission" date="2005-08" db="EMBL/GenBank/DDBJ databases">
        <title>Complete sequence of chromosome 1 of Nitrosospira multiformis ATCC 25196.</title>
        <authorList>
            <person name="Copeland A."/>
            <person name="Lucas S."/>
            <person name="Lapidus A."/>
            <person name="Barry K."/>
            <person name="Detter J.C."/>
            <person name="Glavina T."/>
            <person name="Hammon N."/>
            <person name="Israni S."/>
            <person name="Pitluck S."/>
            <person name="Chain P."/>
            <person name="Malfatti S."/>
            <person name="Shin M."/>
            <person name="Vergez L."/>
            <person name="Schmutz J."/>
            <person name="Larimer F."/>
            <person name="Land M."/>
            <person name="Hauser L."/>
            <person name="Kyrpides N."/>
            <person name="Lykidis A."/>
            <person name="Richardson P."/>
        </authorList>
    </citation>
    <scope>NUCLEOTIDE SEQUENCE [LARGE SCALE GENOMIC DNA]</scope>
    <source>
        <strain>ATCC 25196 / NCIMB 11849 / C 71</strain>
    </source>
</reference>
<dbReference type="EC" id="2.1.1.177" evidence="1"/>
<dbReference type="EMBL" id="CP000103">
    <property type="protein sequence ID" value="ABB73670.1"/>
    <property type="molecule type" value="Genomic_DNA"/>
</dbReference>
<dbReference type="RefSeq" id="WP_011379724.1">
    <property type="nucleotide sequence ID" value="NC_007614.1"/>
</dbReference>
<dbReference type="SMR" id="Q2YC51"/>
<dbReference type="STRING" id="323848.Nmul_A0362"/>
<dbReference type="KEGG" id="nmu:Nmul_A0362"/>
<dbReference type="eggNOG" id="COG1576">
    <property type="taxonomic scope" value="Bacteria"/>
</dbReference>
<dbReference type="HOGENOM" id="CLU_100552_1_0_4"/>
<dbReference type="OrthoDB" id="9806643at2"/>
<dbReference type="Proteomes" id="UP000002718">
    <property type="component" value="Chromosome"/>
</dbReference>
<dbReference type="GO" id="GO:0005737">
    <property type="term" value="C:cytoplasm"/>
    <property type="evidence" value="ECO:0007669"/>
    <property type="project" value="UniProtKB-SubCell"/>
</dbReference>
<dbReference type="GO" id="GO:0070038">
    <property type="term" value="F:rRNA (pseudouridine-N3-)-methyltransferase activity"/>
    <property type="evidence" value="ECO:0007669"/>
    <property type="project" value="UniProtKB-UniRule"/>
</dbReference>
<dbReference type="CDD" id="cd18081">
    <property type="entry name" value="RlmH-like"/>
    <property type="match status" value="1"/>
</dbReference>
<dbReference type="Gene3D" id="3.40.1280.10">
    <property type="match status" value="1"/>
</dbReference>
<dbReference type="HAMAP" id="MF_00658">
    <property type="entry name" value="23SrRNA_methyltr_H"/>
    <property type="match status" value="1"/>
</dbReference>
<dbReference type="InterPro" id="IPR029028">
    <property type="entry name" value="Alpha/beta_knot_MTases"/>
</dbReference>
<dbReference type="InterPro" id="IPR003742">
    <property type="entry name" value="RlmH-like"/>
</dbReference>
<dbReference type="InterPro" id="IPR029026">
    <property type="entry name" value="tRNA_m1G_MTases_N"/>
</dbReference>
<dbReference type="NCBIfam" id="NF000986">
    <property type="entry name" value="PRK00103.1-4"/>
    <property type="match status" value="1"/>
</dbReference>
<dbReference type="NCBIfam" id="TIGR00246">
    <property type="entry name" value="tRNA_RlmH_YbeA"/>
    <property type="match status" value="1"/>
</dbReference>
<dbReference type="PANTHER" id="PTHR33603">
    <property type="entry name" value="METHYLTRANSFERASE"/>
    <property type="match status" value="1"/>
</dbReference>
<dbReference type="PANTHER" id="PTHR33603:SF1">
    <property type="entry name" value="RIBOSOMAL RNA LARGE SUBUNIT METHYLTRANSFERASE H"/>
    <property type="match status" value="1"/>
</dbReference>
<dbReference type="Pfam" id="PF02590">
    <property type="entry name" value="SPOUT_MTase"/>
    <property type="match status" value="1"/>
</dbReference>
<dbReference type="PIRSF" id="PIRSF004505">
    <property type="entry name" value="MT_bac"/>
    <property type="match status" value="1"/>
</dbReference>
<dbReference type="SUPFAM" id="SSF75217">
    <property type="entry name" value="alpha/beta knot"/>
    <property type="match status" value="1"/>
</dbReference>
<feature type="chain" id="PRO_0000260578" description="Ribosomal RNA large subunit methyltransferase H">
    <location>
        <begin position="1"/>
        <end position="156"/>
    </location>
</feature>
<feature type="binding site" evidence="1">
    <location>
        <position position="104"/>
    </location>
    <ligand>
        <name>S-adenosyl-L-methionine</name>
        <dbReference type="ChEBI" id="CHEBI:59789"/>
    </ligand>
</feature>
<feature type="binding site" evidence="1">
    <location>
        <begin position="123"/>
        <end position="128"/>
    </location>
    <ligand>
        <name>S-adenosyl-L-methionine</name>
        <dbReference type="ChEBI" id="CHEBI:59789"/>
    </ligand>
</feature>
<evidence type="ECO:0000255" key="1">
    <source>
        <dbReference type="HAMAP-Rule" id="MF_00658"/>
    </source>
</evidence>
<proteinExistence type="inferred from homology"/>
<organism>
    <name type="scientific">Nitrosospira multiformis (strain ATCC 25196 / NCIMB 11849 / C 71)</name>
    <dbReference type="NCBI Taxonomy" id="323848"/>
    <lineage>
        <taxon>Bacteria</taxon>
        <taxon>Pseudomonadati</taxon>
        <taxon>Pseudomonadota</taxon>
        <taxon>Betaproteobacteria</taxon>
        <taxon>Nitrosomonadales</taxon>
        <taxon>Nitrosomonadaceae</taxon>
        <taxon>Nitrosospira</taxon>
    </lineage>
</organism>
<sequence length="156" mass="17154">MKFLVYAVGHKMPEWIAAGFQEYAKRMPREANIELLEIKPERRDSGKKVEQLLAAEGARIRALLPSNCRLVVMDERGSQWTTAGLAHAIGSWMKDGGDTAFLIGGADGLDPALRNAADEVLALSALTLPHGLVRILLAEQLYRAISLIKGHPYHRA</sequence>
<protein>
    <recommendedName>
        <fullName evidence="1">Ribosomal RNA large subunit methyltransferase H</fullName>
        <ecNumber evidence="1">2.1.1.177</ecNumber>
    </recommendedName>
    <alternativeName>
        <fullName evidence="1">23S rRNA (pseudouridine1915-N3)-methyltransferase</fullName>
    </alternativeName>
    <alternativeName>
        <fullName evidence="1">23S rRNA m3Psi1915 methyltransferase</fullName>
    </alternativeName>
    <alternativeName>
        <fullName evidence="1">rRNA (pseudouridine-N3-)-methyltransferase RlmH</fullName>
    </alternativeName>
</protein>
<comment type="function">
    <text evidence="1">Specifically methylates the pseudouridine at position 1915 (m3Psi1915) in 23S rRNA.</text>
</comment>
<comment type="catalytic activity">
    <reaction evidence="1">
        <text>pseudouridine(1915) in 23S rRNA + S-adenosyl-L-methionine = N(3)-methylpseudouridine(1915) in 23S rRNA + S-adenosyl-L-homocysteine + H(+)</text>
        <dbReference type="Rhea" id="RHEA:42752"/>
        <dbReference type="Rhea" id="RHEA-COMP:10221"/>
        <dbReference type="Rhea" id="RHEA-COMP:10222"/>
        <dbReference type="ChEBI" id="CHEBI:15378"/>
        <dbReference type="ChEBI" id="CHEBI:57856"/>
        <dbReference type="ChEBI" id="CHEBI:59789"/>
        <dbReference type="ChEBI" id="CHEBI:65314"/>
        <dbReference type="ChEBI" id="CHEBI:74486"/>
        <dbReference type="EC" id="2.1.1.177"/>
    </reaction>
</comment>
<comment type="subunit">
    <text evidence="1">Homodimer.</text>
</comment>
<comment type="subcellular location">
    <subcellularLocation>
        <location evidence="1">Cytoplasm</location>
    </subcellularLocation>
</comment>
<comment type="similarity">
    <text evidence="1">Belongs to the RNA methyltransferase RlmH family.</text>
</comment>
<gene>
    <name evidence="1" type="primary">rlmH</name>
    <name type="ordered locus">Nmul_A0362</name>
</gene>